<accession>Q6D0E4</accession>
<keyword id="KW-0997">Cell inner membrane</keyword>
<keyword id="KW-1003">Cell membrane</keyword>
<keyword id="KW-0143">Chaperone</keyword>
<keyword id="KW-0472">Membrane</keyword>
<keyword id="KW-1185">Reference proteome</keyword>
<keyword id="KW-0812">Transmembrane</keyword>
<keyword id="KW-1133">Transmembrane helix</keyword>
<comment type="function">
    <text evidence="1">Regulatory DnaK co-chaperone. Direct interaction between DnaK and DjlA is needed for the induction of the wcaABCDE operon, involved in the synthesis of a colanic acid polysaccharide capsule, possibly through activation of the RcsB/RcsC phosphotransfer signaling pathway. The colanic acid capsule may help the bacterium survive conditions outside the host.</text>
</comment>
<comment type="subunit">
    <text evidence="1">Homodimer.</text>
</comment>
<comment type="subcellular location">
    <subcellularLocation>
        <location evidence="1">Cell inner membrane</location>
        <topology evidence="1">Single-pass type III membrane protein</topology>
    </subcellularLocation>
</comment>
<comment type="domain">
    <text evidence="1">The transmembrane domain is a dimerization domain.</text>
</comment>
<organism>
    <name type="scientific">Pectobacterium atrosepticum (strain SCRI 1043 / ATCC BAA-672)</name>
    <name type="common">Erwinia carotovora subsp. atroseptica</name>
    <dbReference type="NCBI Taxonomy" id="218491"/>
    <lineage>
        <taxon>Bacteria</taxon>
        <taxon>Pseudomonadati</taxon>
        <taxon>Pseudomonadota</taxon>
        <taxon>Gammaproteobacteria</taxon>
        <taxon>Enterobacterales</taxon>
        <taxon>Pectobacteriaceae</taxon>
        <taxon>Pectobacterium</taxon>
    </lineage>
</organism>
<protein>
    <recommendedName>
        <fullName evidence="1">Co-chaperone protein DjlA</fullName>
    </recommendedName>
</protein>
<dbReference type="EMBL" id="BX950851">
    <property type="protein sequence ID" value="CAG76753.1"/>
    <property type="molecule type" value="Genomic_DNA"/>
</dbReference>
<dbReference type="RefSeq" id="WP_011095353.1">
    <property type="nucleotide sequence ID" value="NC_004547.2"/>
</dbReference>
<dbReference type="STRING" id="218491.ECA3855"/>
<dbReference type="GeneID" id="57210473"/>
<dbReference type="KEGG" id="eca:ECA3855"/>
<dbReference type="PATRIC" id="fig|218491.5.peg.3910"/>
<dbReference type="eggNOG" id="COG1076">
    <property type="taxonomic scope" value="Bacteria"/>
</dbReference>
<dbReference type="HOGENOM" id="CLU_066221_1_0_6"/>
<dbReference type="OrthoDB" id="9782583at2"/>
<dbReference type="Proteomes" id="UP000007966">
    <property type="component" value="Chromosome"/>
</dbReference>
<dbReference type="GO" id="GO:0005886">
    <property type="term" value="C:plasma membrane"/>
    <property type="evidence" value="ECO:0007669"/>
    <property type="project" value="UniProtKB-SubCell"/>
</dbReference>
<dbReference type="GO" id="GO:0051087">
    <property type="term" value="F:protein-folding chaperone binding"/>
    <property type="evidence" value="ECO:0007669"/>
    <property type="project" value="InterPro"/>
</dbReference>
<dbReference type="CDD" id="cd06257">
    <property type="entry name" value="DnaJ"/>
    <property type="match status" value="1"/>
</dbReference>
<dbReference type="CDD" id="cd07316">
    <property type="entry name" value="terB_like_DjlA"/>
    <property type="match status" value="1"/>
</dbReference>
<dbReference type="Gene3D" id="1.10.287.110">
    <property type="entry name" value="DnaJ domain"/>
    <property type="match status" value="1"/>
</dbReference>
<dbReference type="Gene3D" id="1.10.3680.10">
    <property type="entry name" value="TerB-like"/>
    <property type="match status" value="1"/>
</dbReference>
<dbReference type="HAMAP" id="MF_01153">
    <property type="entry name" value="DjlA"/>
    <property type="match status" value="1"/>
</dbReference>
<dbReference type="InterPro" id="IPR023749">
    <property type="entry name" value="DjlA"/>
</dbReference>
<dbReference type="InterPro" id="IPR050817">
    <property type="entry name" value="DjlA_DnaK_co-chaperone"/>
</dbReference>
<dbReference type="InterPro" id="IPR007791">
    <property type="entry name" value="DjlA_N"/>
</dbReference>
<dbReference type="InterPro" id="IPR001623">
    <property type="entry name" value="DnaJ_domain"/>
</dbReference>
<dbReference type="InterPro" id="IPR036869">
    <property type="entry name" value="J_dom_sf"/>
</dbReference>
<dbReference type="InterPro" id="IPR029024">
    <property type="entry name" value="TerB-like"/>
</dbReference>
<dbReference type="NCBIfam" id="NF006948">
    <property type="entry name" value="PRK09430.1"/>
    <property type="match status" value="1"/>
</dbReference>
<dbReference type="PANTHER" id="PTHR24074">
    <property type="entry name" value="CO-CHAPERONE PROTEIN DJLA"/>
    <property type="match status" value="1"/>
</dbReference>
<dbReference type="Pfam" id="PF00226">
    <property type="entry name" value="DnaJ"/>
    <property type="match status" value="1"/>
</dbReference>
<dbReference type="Pfam" id="PF05099">
    <property type="entry name" value="TerB"/>
    <property type="match status" value="1"/>
</dbReference>
<dbReference type="PRINTS" id="PR00625">
    <property type="entry name" value="JDOMAIN"/>
</dbReference>
<dbReference type="SMART" id="SM00271">
    <property type="entry name" value="DnaJ"/>
    <property type="match status" value="1"/>
</dbReference>
<dbReference type="SUPFAM" id="SSF46565">
    <property type="entry name" value="Chaperone J-domain"/>
    <property type="match status" value="1"/>
</dbReference>
<dbReference type="SUPFAM" id="SSF158682">
    <property type="entry name" value="TerB-like"/>
    <property type="match status" value="1"/>
</dbReference>
<dbReference type="PROSITE" id="PS50076">
    <property type="entry name" value="DNAJ_2"/>
    <property type="match status" value="1"/>
</dbReference>
<reference key="1">
    <citation type="journal article" date="2004" name="Proc. Natl. Acad. Sci. U.S.A.">
        <title>Genome sequence of the enterobacterial phytopathogen Erwinia carotovora subsp. atroseptica and characterization of virulence factors.</title>
        <authorList>
            <person name="Bell K.S."/>
            <person name="Sebaihia M."/>
            <person name="Pritchard L."/>
            <person name="Holden M.T.G."/>
            <person name="Hyman L.J."/>
            <person name="Holeva M.C."/>
            <person name="Thomson N.R."/>
            <person name="Bentley S.D."/>
            <person name="Churcher L.J.C."/>
            <person name="Mungall K."/>
            <person name="Atkin R."/>
            <person name="Bason N."/>
            <person name="Brooks K."/>
            <person name="Chillingworth T."/>
            <person name="Clark K."/>
            <person name="Doggett J."/>
            <person name="Fraser A."/>
            <person name="Hance Z."/>
            <person name="Hauser H."/>
            <person name="Jagels K."/>
            <person name="Moule S."/>
            <person name="Norbertczak H."/>
            <person name="Ormond D."/>
            <person name="Price C."/>
            <person name="Quail M.A."/>
            <person name="Sanders M."/>
            <person name="Walker D."/>
            <person name="Whitehead S."/>
            <person name="Salmond G.P.C."/>
            <person name="Birch P.R.J."/>
            <person name="Parkhill J."/>
            <person name="Toth I.K."/>
        </authorList>
    </citation>
    <scope>NUCLEOTIDE SEQUENCE [LARGE SCALE GENOMIC DNA]</scope>
    <source>
        <strain>SCRI 1043 / ATCC BAA-672</strain>
    </source>
</reference>
<gene>
    <name evidence="1" type="primary">djlA</name>
    <name type="ordered locus">ECA3855</name>
</gene>
<proteinExistence type="inferred from homology"/>
<feature type="chain" id="PRO_0000209427" description="Co-chaperone protein DjlA">
    <location>
        <begin position="1"/>
        <end position="291"/>
    </location>
</feature>
<feature type="topological domain" description="Periplasmic" evidence="1">
    <location>
        <begin position="1"/>
        <end position="6"/>
    </location>
</feature>
<feature type="transmembrane region" description="Helical" evidence="1">
    <location>
        <begin position="7"/>
        <end position="31"/>
    </location>
</feature>
<feature type="topological domain" description="Cytoplasmic" evidence="1">
    <location>
        <begin position="32"/>
        <end position="291"/>
    </location>
</feature>
<feature type="domain" description="J" evidence="1">
    <location>
        <begin position="225"/>
        <end position="291"/>
    </location>
</feature>
<feature type="region of interest" description="Disordered" evidence="2">
    <location>
        <begin position="177"/>
        <end position="223"/>
    </location>
</feature>
<feature type="compositionally biased region" description="Low complexity" evidence="2">
    <location>
        <begin position="181"/>
        <end position="211"/>
    </location>
</feature>
<sequence length="291" mass="33156">MRYWGKLLGLALGIVSSTGIWGMIMGLLMGHWIDRARASRRRDYFSAQSTRQSLFFLTTFQAMGHLTKSKGRVTEADINIATKMMDRLELFGDARAAAQRAFREGKAGQFPLRIKLRKLRDACLGRFDLIKMFLEIQLQVAFVDGVLHPNERRVLYVIADELGVTREQFEFFLRNMESPTGQQSRQNQSRQNGKSQQRRNNGYSNGHSYGGQRPPSPLRGPTVESACRTLGVRSSDDAVTIKRAYRKLMSEHHPDKLVAKKLSPRMMEMAKRKAQDIQAAYELLKSANQTK</sequence>
<evidence type="ECO:0000255" key="1">
    <source>
        <dbReference type="HAMAP-Rule" id="MF_01153"/>
    </source>
</evidence>
<evidence type="ECO:0000256" key="2">
    <source>
        <dbReference type="SAM" id="MobiDB-lite"/>
    </source>
</evidence>
<name>DJLA_PECAS</name>